<proteinExistence type="inferred from homology"/>
<organism>
    <name type="scientific">Escherichia coli (strain SMS-3-5 / SECEC)</name>
    <dbReference type="NCBI Taxonomy" id="439855"/>
    <lineage>
        <taxon>Bacteria</taxon>
        <taxon>Pseudomonadati</taxon>
        <taxon>Pseudomonadota</taxon>
        <taxon>Gammaproteobacteria</taxon>
        <taxon>Enterobacterales</taxon>
        <taxon>Enterobacteriaceae</taxon>
        <taxon>Escherichia</taxon>
    </lineage>
</organism>
<protein>
    <recommendedName>
        <fullName evidence="1">UDP-N-acetylglucosamine--N-acetylmuramyl-(pentapeptide) pyrophosphoryl-undecaprenol N-acetylglucosamine transferase</fullName>
        <ecNumber evidence="1">2.4.1.227</ecNumber>
    </recommendedName>
    <alternativeName>
        <fullName evidence="1">Undecaprenyl-PP-MurNAc-pentapeptide-UDPGlcNAc GlcNAc transferase</fullName>
    </alternativeName>
</protein>
<keyword id="KW-0131">Cell cycle</keyword>
<keyword id="KW-0132">Cell division</keyword>
<keyword id="KW-0997">Cell inner membrane</keyword>
<keyword id="KW-1003">Cell membrane</keyword>
<keyword id="KW-0133">Cell shape</keyword>
<keyword id="KW-0961">Cell wall biogenesis/degradation</keyword>
<keyword id="KW-0328">Glycosyltransferase</keyword>
<keyword id="KW-0472">Membrane</keyword>
<keyword id="KW-0573">Peptidoglycan synthesis</keyword>
<keyword id="KW-0808">Transferase</keyword>
<evidence type="ECO:0000255" key="1">
    <source>
        <dbReference type="HAMAP-Rule" id="MF_00033"/>
    </source>
</evidence>
<feature type="chain" id="PRO_1000116479" description="UDP-N-acetylglucosamine--N-acetylmuramyl-(pentapeptide) pyrophosphoryl-undecaprenol N-acetylglucosamine transferase">
    <location>
        <begin position="1"/>
        <end position="355"/>
    </location>
</feature>
<feature type="binding site" evidence="1">
    <location>
        <begin position="15"/>
        <end position="17"/>
    </location>
    <ligand>
        <name>UDP-N-acetyl-alpha-D-glucosamine</name>
        <dbReference type="ChEBI" id="CHEBI:57705"/>
    </ligand>
</feature>
<feature type="binding site" evidence="1">
    <location>
        <position position="127"/>
    </location>
    <ligand>
        <name>UDP-N-acetyl-alpha-D-glucosamine</name>
        <dbReference type="ChEBI" id="CHEBI:57705"/>
    </ligand>
</feature>
<feature type="binding site" evidence="1">
    <location>
        <position position="163"/>
    </location>
    <ligand>
        <name>UDP-N-acetyl-alpha-D-glucosamine</name>
        <dbReference type="ChEBI" id="CHEBI:57705"/>
    </ligand>
</feature>
<feature type="binding site" evidence="1">
    <location>
        <position position="191"/>
    </location>
    <ligand>
        <name>UDP-N-acetyl-alpha-D-glucosamine</name>
        <dbReference type="ChEBI" id="CHEBI:57705"/>
    </ligand>
</feature>
<feature type="binding site" evidence="1">
    <location>
        <position position="244"/>
    </location>
    <ligand>
        <name>UDP-N-acetyl-alpha-D-glucosamine</name>
        <dbReference type="ChEBI" id="CHEBI:57705"/>
    </ligand>
</feature>
<feature type="binding site" evidence="1">
    <location>
        <begin position="263"/>
        <end position="268"/>
    </location>
    <ligand>
        <name>UDP-N-acetyl-alpha-D-glucosamine</name>
        <dbReference type="ChEBI" id="CHEBI:57705"/>
    </ligand>
</feature>
<feature type="binding site" evidence="1">
    <location>
        <position position="288"/>
    </location>
    <ligand>
        <name>UDP-N-acetyl-alpha-D-glucosamine</name>
        <dbReference type="ChEBI" id="CHEBI:57705"/>
    </ligand>
</feature>
<gene>
    <name evidence="1" type="primary">murG</name>
    <name type="ordered locus">EcSMS35_0095</name>
</gene>
<reference key="1">
    <citation type="journal article" date="2008" name="J. Bacteriol.">
        <title>Insights into the environmental resistance gene pool from the genome sequence of the multidrug-resistant environmental isolate Escherichia coli SMS-3-5.</title>
        <authorList>
            <person name="Fricke W.F."/>
            <person name="Wright M.S."/>
            <person name="Lindell A.H."/>
            <person name="Harkins D.M."/>
            <person name="Baker-Austin C."/>
            <person name="Ravel J."/>
            <person name="Stepanauskas R."/>
        </authorList>
    </citation>
    <scope>NUCLEOTIDE SEQUENCE [LARGE SCALE GENOMIC DNA]</scope>
    <source>
        <strain>SMS-3-5 / SECEC</strain>
    </source>
</reference>
<comment type="function">
    <text evidence="1">Cell wall formation. Catalyzes the transfer of a GlcNAc subunit on undecaprenyl-pyrophosphoryl-MurNAc-pentapeptide (lipid intermediate I) to form undecaprenyl-pyrophosphoryl-MurNAc-(pentapeptide)GlcNAc (lipid intermediate II).</text>
</comment>
<comment type="catalytic activity">
    <reaction evidence="1">
        <text>di-trans,octa-cis-undecaprenyl diphospho-N-acetyl-alpha-D-muramoyl-L-alanyl-D-glutamyl-meso-2,6-diaminopimeloyl-D-alanyl-D-alanine + UDP-N-acetyl-alpha-D-glucosamine = di-trans,octa-cis-undecaprenyl diphospho-[N-acetyl-alpha-D-glucosaminyl-(1-&gt;4)]-N-acetyl-alpha-D-muramoyl-L-alanyl-D-glutamyl-meso-2,6-diaminopimeloyl-D-alanyl-D-alanine + UDP + H(+)</text>
        <dbReference type="Rhea" id="RHEA:31227"/>
        <dbReference type="ChEBI" id="CHEBI:15378"/>
        <dbReference type="ChEBI" id="CHEBI:57705"/>
        <dbReference type="ChEBI" id="CHEBI:58223"/>
        <dbReference type="ChEBI" id="CHEBI:61387"/>
        <dbReference type="ChEBI" id="CHEBI:61388"/>
        <dbReference type="EC" id="2.4.1.227"/>
    </reaction>
</comment>
<comment type="pathway">
    <text evidence="1">Cell wall biogenesis; peptidoglycan biosynthesis.</text>
</comment>
<comment type="subcellular location">
    <subcellularLocation>
        <location evidence="1">Cell inner membrane</location>
        <topology evidence="1">Peripheral membrane protein</topology>
        <orientation evidence="1">Cytoplasmic side</orientation>
    </subcellularLocation>
</comment>
<comment type="similarity">
    <text evidence="1">Belongs to the glycosyltransferase 28 family. MurG subfamily.</text>
</comment>
<dbReference type="EC" id="2.4.1.227" evidence="1"/>
<dbReference type="EMBL" id="CP000970">
    <property type="protein sequence ID" value="ACB19216.1"/>
    <property type="molecule type" value="Genomic_DNA"/>
</dbReference>
<dbReference type="RefSeq" id="WP_000016559.1">
    <property type="nucleotide sequence ID" value="NC_010498.1"/>
</dbReference>
<dbReference type="SMR" id="B1LG27"/>
<dbReference type="CAZy" id="GT28">
    <property type="family name" value="Glycosyltransferase Family 28"/>
</dbReference>
<dbReference type="GeneID" id="93777344"/>
<dbReference type="KEGG" id="ecm:EcSMS35_0095"/>
<dbReference type="HOGENOM" id="CLU_037404_2_0_6"/>
<dbReference type="UniPathway" id="UPA00219"/>
<dbReference type="Proteomes" id="UP000007011">
    <property type="component" value="Chromosome"/>
</dbReference>
<dbReference type="GO" id="GO:0005886">
    <property type="term" value="C:plasma membrane"/>
    <property type="evidence" value="ECO:0007669"/>
    <property type="project" value="UniProtKB-SubCell"/>
</dbReference>
<dbReference type="GO" id="GO:0051991">
    <property type="term" value="F:UDP-N-acetyl-D-glucosamine:N-acetylmuramoyl-L-alanyl-D-glutamyl-meso-2,6-diaminopimelyl-D-alanyl-D-alanine-diphosphoundecaprenol 4-beta-N-acetylglucosaminlytransferase activity"/>
    <property type="evidence" value="ECO:0007669"/>
    <property type="project" value="RHEA"/>
</dbReference>
<dbReference type="GO" id="GO:0050511">
    <property type="term" value="F:undecaprenyldiphospho-muramoylpentapeptide beta-N-acetylglucosaminyltransferase activity"/>
    <property type="evidence" value="ECO:0007669"/>
    <property type="project" value="UniProtKB-UniRule"/>
</dbReference>
<dbReference type="GO" id="GO:0005975">
    <property type="term" value="P:carbohydrate metabolic process"/>
    <property type="evidence" value="ECO:0007669"/>
    <property type="project" value="InterPro"/>
</dbReference>
<dbReference type="GO" id="GO:0051301">
    <property type="term" value="P:cell division"/>
    <property type="evidence" value="ECO:0007669"/>
    <property type="project" value="UniProtKB-KW"/>
</dbReference>
<dbReference type="GO" id="GO:0071555">
    <property type="term" value="P:cell wall organization"/>
    <property type="evidence" value="ECO:0007669"/>
    <property type="project" value="UniProtKB-KW"/>
</dbReference>
<dbReference type="GO" id="GO:0030259">
    <property type="term" value="P:lipid glycosylation"/>
    <property type="evidence" value="ECO:0007669"/>
    <property type="project" value="UniProtKB-UniRule"/>
</dbReference>
<dbReference type="GO" id="GO:0009252">
    <property type="term" value="P:peptidoglycan biosynthetic process"/>
    <property type="evidence" value="ECO:0007669"/>
    <property type="project" value="UniProtKB-UniRule"/>
</dbReference>
<dbReference type="GO" id="GO:0008360">
    <property type="term" value="P:regulation of cell shape"/>
    <property type="evidence" value="ECO:0007669"/>
    <property type="project" value="UniProtKB-KW"/>
</dbReference>
<dbReference type="CDD" id="cd03785">
    <property type="entry name" value="GT28_MurG"/>
    <property type="match status" value="1"/>
</dbReference>
<dbReference type="FunFam" id="3.40.50.2000:FF:000016">
    <property type="entry name" value="UDP-N-acetylglucosamine--N-acetylmuramyl-(pentapeptide) pyrophosphoryl-undecaprenol N-acetylglucosamine transferase"/>
    <property type="match status" value="1"/>
</dbReference>
<dbReference type="FunFam" id="3.40.50.2000:FF:000018">
    <property type="entry name" value="UDP-N-acetylglucosamine--N-acetylmuramyl-(pentapeptide) pyrophosphoryl-undecaprenol N-acetylglucosamine transferase"/>
    <property type="match status" value="1"/>
</dbReference>
<dbReference type="Gene3D" id="3.40.50.2000">
    <property type="entry name" value="Glycogen Phosphorylase B"/>
    <property type="match status" value="2"/>
</dbReference>
<dbReference type="HAMAP" id="MF_00033">
    <property type="entry name" value="MurG"/>
    <property type="match status" value="1"/>
</dbReference>
<dbReference type="InterPro" id="IPR006009">
    <property type="entry name" value="GlcNAc_MurG"/>
</dbReference>
<dbReference type="InterPro" id="IPR007235">
    <property type="entry name" value="Glyco_trans_28_C"/>
</dbReference>
<dbReference type="InterPro" id="IPR004276">
    <property type="entry name" value="GlycoTrans_28_N"/>
</dbReference>
<dbReference type="NCBIfam" id="TIGR01133">
    <property type="entry name" value="murG"/>
    <property type="match status" value="1"/>
</dbReference>
<dbReference type="PANTHER" id="PTHR21015:SF22">
    <property type="entry name" value="GLYCOSYLTRANSFERASE"/>
    <property type="match status" value="1"/>
</dbReference>
<dbReference type="PANTHER" id="PTHR21015">
    <property type="entry name" value="UDP-N-ACETYLGLUCOSAMINE--N-ACETYLMURAMYL-(PENTAPEPTIDE) PYROPHOSPHORYL-UNDECAPRENOL N-ACETYLGLUCOSAMINE TRANSFERASE 1"/>
    <property type="match status" value="1"/>
</dbReference>
<dbReference type="Pfam" id="PF04101">
    <property type="entry name" value="Glyco_tran_28_C"/>
    <property type="match status" value="1"/>
</dbReference>
<dbReference type="Pfam" id="PF03033">
    <property type="entry name" value="Glyco_transf_28"/>
    <property type="match status" value="1"/>
</dbReference>
<dbReference type="SUPFAM" id="SSF53756">
    <property type="entry name" value="UDP-Glycosyltransferase/glycogen phosphorylase"/>
    <property type="match status" value="1"/>
</dbReference>
<accession>B1LG27</accession>
<name>MURG_ECOSM</name>
<sequence length="355" mass="37787">MSGQGKRLMVMAGGTGGHVFPGLAVAHHLMAQGWQVRWLGTADRMEADLVPKHGIEIDFIRISGLRGKGIKALIAAPLRIFNAWRQARAIMKAYKPDVVLGMGGYVSGPGGLAAWSLGIPVVLHEQNGIAGLTNKWLAKIATKVMQAFPGAFPNAEVVGNPVRTDVLALPLPQQRLAGREGPVRVLVVGGSQGARILNQTMPQVAAKLGDSVTIWHQSGKGSQQSVEQAYAEAGQPQHKVTEFIDDMAAAYAWADVVVCRSGALTVSEIAAAGLPALFVPFQHKDRQQYWNALPLEKAGAAKIIEQPQLSVDAVANTLAGWSRETLLTMAERARAASIPDATERVANEVSRAARA</sequence>